<reference key="1">
    <citation type="journal article" date="1998" name="J. Mol. Endocrinol.">
        <title>Multiple GnRHs present in a teleost species are encoded by separate genes: analysis of the sbGnRH and cGnRH-II genes from the striped bass, Morone saxatilis.</title>
        <authorList>
            <person name="Chow M.M."/>
            <person name="Kight K.E."/>
            <person name="Gothilf Y."/>
            <person name="Alok D."/>
            <person name="Stubblefield J."/>
            <person name="Zohar Y."/>
        </authorList>
    </citation>
    <scope>NUCLEOTIDE SEQUENCE [GENOMIC DNA]</scope>
</reference>
<protein>
    <recommendedName>
        <fullName>Progonadoliberin-1</fullName>
    </recommendedName>
    <alternativeName>
        <fullName>Progonadoliberin I</fullName>
    </alternativeName>
    <component>
        <recommendedName>
            <fullName>Gonadoliberin-1</fullName>
        </recommendedName>
        <alternativeName>
            <fullName>Gonadoliberin I</fullName>
        </alternativeName>
        <alternativeName>
            <fullName>Gonadotropin-releasing hormone I</fullName>
            <shortName>GnRH-I</shortName>
        </alternativeName>
        <alternativeName>
            <fullName>Luliberin I</fullName>
        </alternativeName>
        <alternativeName>
            <fullName>Luteinizing hormone-releasing hormone I</fullName>
            <shortName>LH-RH I</shortName>
        </alternativeName>
    </component>
    <component>
        <recommendedName>
            <fullName>GnRH-associated peptide 1</fullName>
        </recommendedName>
        <alternativeName>
            <fullName>GnRH-associated peptide I</fullName>
        </alternativeName>
    </component>
</protein>
<accession>O73812</accession>
<proteinExistence type="inferred from homology"/>
<organism>
    <name type="scientific">Morone saxatilis</name>
    <name type="common">Striped bass</name>
    <name type="synonym">Perca saxatilis</name>
    <dbReference type="NCBI Taxonomy" id="34816"/>
    <lineage>
        <taxon>Eukaryota</taxon>
        <taxon>Metazoa</taxon>
        <taxon>Chordata</taxon>
        <taxon>Craniata</taxon>
        <taxon>Vertebrata</taxon>
        <taxon>Euteleostomi</taxon>
        <taxon>Actinopterygii</taxon>
        <taxon>Neopterygii</taxon>
        <taxon>Teleostei</taxon>
        <taxon>Neoteleostei</taxon>
        <taxon>Acanthomorphata</taxon>
        <taxon>Eupercaria</taxon>
        <taxon>Moronidae</taxon>
        <taxon>Morone</taxon>
    </lineage>
</organism>
<sequence>MAPQTFALWLLLVGTLLGQGCCQHWSYGLSPGGKRELDGLSETLGNQIVGGFPHVETPCRVLGCAVESPFPKIYRMKGFLDAVTDRENGPRTYKK</sequence>
<feature type="signal peptide" evidence="2">
    <location>
        <begin position="1"/>
        <end position="22"/>
    </location>
</feature>
<feature type="chain" id="PRO_0000012435" description="Progonadoliberin-1">
    <location>
        <begin position="23"/>
        <end position="95"/>
    </location>
</feature>
<feature type="peptide" id="PRO_0000012436" description="Gonadoliberin-1">
    <location>
        <begin position="23"/>
        <end position="32"/>
    </location>
</feature>
<feature type="peptide" id="PRO_0000012437" description="GnRH-associated peptide 1" evidence="2">
    <location>
        <begin position="36"/>
        <end position="95"/>
    </location>
</feature>
<feature type="modified residue" description="Pyrrolidone carboxylic acid" evidence="1">
    <location>
        <position position="23"/>
    </location>
</feature>
<feature type="modified residue" description="Glycine amide" evidence="1">
    <location>
        <position position="32"/>
    </location>
</feature>
<evidence type="ECO:0000250" key="1"/>
<evidence type="ECO:0000255" key="2"/>
<evidence type="ECO:0000305" key="3"/>
<dbReference type="EMBL" id="AF056314">
    <property type="protein sequence ID" value="AAD03817.1"/>
    <property type="molecule type" value="Genomic_DNA"/>
</dbReference>
<dbReference type="GO" id="GO:0005615">
    <property type="term" value="C:extracellular space"/>
    <property type="evidence" value="ECO:0000250"/>
    <property type="project" value="UniProtKB"/>
</dbReference>
<dbReference type="GO" id="GO:0005179">
    <property type="term" value="F:hormone activity"/>
    <property type="evidence" value="ECO:0007669"/>
    <property type="project" value="UniProtKB-KW"/>
</dbReference>
<dbReference type="InterPro" id="IPR002012">
    <property type="entry name" value="GnRH"/>
</dbReference>
<dbReference type="PROSITE" id="PS00473">
    <property type="entry name" value="GNRH"/>
    <property type="match status" value="1"/>
</dbReference>
<name>GON1_MORSA</name>
<keyword id="KW-0027">Amidation</keyword>
<keyword id="KW-0165">Cleavage on pair of basic residues</keyword>
<keyword id="KW-0372">Hormone</keyword>
<keyword id="KW-0873">Pyrrolidone carboxylic acid</keyword>
<keyword id="KW-0964">Secreted</keyword>
<keyword id="KW-0732">Signal</keyword>
<gene>
    <name type="primary">gnrh1</name>
</gene>
<comment type="function">
    <text evidence="1">Stimulates the secretion of gonadotropins.</text>
</comment>
<comment type="subcellular location">
    <subcellularLocation>
        <location>Secreted</location>
    </subcellularLocation>
</comment>
<comment type="similarity">
    <text evidence="3">Belongs to the GnRH family.</text>
</comment>